<comment type="similarity">
    <text evidence="2">Belongs to the herpesviridae UL92 family.</text>
</comment>
<protein>
    <recommendedName>
        <fullName>Gene 31 protein</fullName>
    </recommendedName>
</protein>
<gene>
    <name type="primary">31</name>
</gene>
<evidence type="ECO:0000256" key="1">
    <source>
        <dbReference type="SAM" id="MobiDB-lite"/>
    </source>
</evidence>
<evidence type="ECO:0000305" key="2"/>
<reference key="1">
    <citation type="journal article" date="1995" name="J. Mol. Biol.">
        <title>The DNA sequence of equine herpesvirus 2.</title>
        <authorList>
            <person name="Telford E.A.R."/>
            <person name="Watson M.S."/>
            <person name="Aird H.C."/>
            <person name="Perry J."/>
            <person name="Davison A.J."/>
        </authorList>
    </citation>
    <scope>NUCLEOTIDE SEQUENCE [LARGE SCALE GENOMIC DNA]</scope>
</reference>
<dbReference type="EMBL" id="U20824">
    <property type="protein sequence ID" value="AAC13818.1"/>
    <property type="molecule type" value="Genomic_DNA"/>
</dbReference>
<dbReference type="PIR" id="S55625">
    <property type="entry name" value="S55625"/>
</dbReference>
<dbReference type="KEGG" id="vg:1461065"/>
<dbReference type="Proteomes" id="UP000007083">
    <property type="component" value="Segment"/>
</dbReference>
<dbReference type="InterPro" id="IPR004289">
    <property type="entry name" value="Herpes_UL92"/>
</dbReference>
<dbReference type="Pfam" id="PF03048">
    <property type="entry name" value="Herpes_UL92"/>
    <property type="match status" value="1"/>
</dbReference>
<sequence>MSGVFLEAAAGAAGRPAGLPGRGGQPGLAGAEGGEGRAGPGAHGDGVRQGGGLQTGGAGAAARHRGAVAPTKLRCGGPEGCYYARVESLICALHGVSSLYVCRACENYHVCDGGDECIVVNTGDNMVCFLTGNCVADNIQDFCDLNIAVKKKEMECAPTDDYNTFLGIAEAIKKDIFTFFNREDGKLAEIREAILTEGGLRPEIGRLIEVTLRVSIHIFSKSDHGYDVICSMYVQIIISIYSTKTVYNGLLFKCTKNKRYDSVLKKMRELWMSTSATGGCAGAAAAD</sequence>
<feature type="chain" id="PRO_0000406070" description="Gene 31 protein">
    <location>
        <begin position="1"/>
        <end position="287"/>
    </location>
</feature>
<feature type="region of interest" description="Disordered" evidence="1">
    <location>
        <begin position="13"/>
        <end position="58"/>
    </location>
</feature>
<feature type="compositionally biased region" description="Gly residues" evidence="1">
    <location>
        <begin position="20"/>
        <end position="58"/>
    </location>
</feature>
<organism>
    <name type="scientific">Equine herpesvirus 2 (strain 86/87)</name>
    <name type="common">EHV-2</name>
    <dbReference type="NCBI Taxonomy" id="82831"/>
    <lineage>
        <taxon>Viruses</taxon>
        <taxon>Duplodnaviria</taxon>
        <taxon>Heunggongvirae</taxon>
        <taxon>Peploviricota</taxon>
        <taxon>Herviviricetes</taxon>
        <taxon>Herpesvirales</taxon>
        <taxon>Orthoherpesviridae</taxon>
        <taxon>Gammaherpesvirinae</taxon>
        <taxon>Percavirus</taxon>
        <taxon>Percavirus equidgamma2</taxon>
        <taxon>Equid gammaherpesvirus 2</taxon>
    </lineage>
</organism>
<proteinExistence type="inferred from homology"/>
<keyword id="KW-1185">Reference proteome</keyword>
<accession>Q66634</accession>
<name>UL92_EHV2</name>
<organismHost>
    <name type="scientific">Equus caballus</name>
    <name type="common">Horse</name>
    <dbReference type="NCBI Taxonomy" id="9796"/>
</organismHost>